<organism>
    <name type="scientific">Streptococcus agalactiae serotype III (strain NEM316)</name>
    <dbReference type="NCBI Taxonomy" id="211110"/>
    <lineage>
        <taxon>Bacteria</taxon>
        <taxon>Bacillati</taxon>
        <taxon>Bacillota</taxon>
        <taxon>Bacilli</taxon>
        <taxon>Lactobacillales</taxon>
        <taxon>Streptococcaceae</taxon>
        <taxon>Streptococcus</taxon>
    </lineage>
</organism>
<evidence type="ECO:0000255" key="1">
    <source>
        <dbReference type="HAMAP-Rule" id="MF_01631"/>
    </source>
</evidence>
<keyword id="KW-0012">Acyltransferase</keyword>
<keyword id="KW-0133">Cell shape</keyword>
<keyword id="KW-0961">Cell wall biogenesis/degradation</keyword>
<keyword id="KW-0963">Cytoplasm</keyword>
<keyword id="KW-0460">Magnesium</keyword>
<keyword id="KW-0479">Metal-binding</keyword>
<keyword id="KW-0511">Multifunctional enzyme</keyword>
<keyword id="KW-0548">Nucleotidyltransferase</keyword>
<keyword id="KW-0573">Peptidoglycan synthesis</keyword>
<keyword id="KW-0677">Repeat</keyword>
<keyword id="KW-0808">Transferase</keyword>
<gene>
    <name evidence="1" type="primary">glmU</name>
    <name type="ordered locus">gbs1594</name>
</gene>
<proteinExistence type="inferred from homology"/>
<sequence>MSNYAIILAAGKGTRMKSDLPKVMHKVSGITMLEHVFRSVQAIEPSKIVTVIGHKAELVRDVLGDKSEFVMQTEQLGTGHAVMMAEEELATSKGHTLVIAGDTPLITGESLKNLIGFHVNHKNVATILTADAANPFGYGRIIRNSDDEVTKIVEQKDANDFEQQVKEINTGTYVFDNQSLFEALKDINTNNAQGEYYLTDVIGIFKEAGKKVGAYKLRDFDESLGVNDRVALATAEKVMRHRIARQHMVNGVTVVNPDSAYIDIDVEIGEESVIEPNVTLKGQTKIGKGTLLTNGSYLVDAQVGNDVTITNSMVEESIISDGVTVGPYAHIRPGTSLAKGVHIGNFVEVKGSQIGENTKAGHLTYIGNAEVGCDVNFGAGTITVNYDGQNKFKTEIGSNVFIGSNSTLIAPLEIGDNALTAAGSTITDNVPIDSIAIGRGRQVNKEGYANKKPHHPSQK</sequence>
<accession>Q8E409</accession>
<name>GLMU_STRA3</name>
<dbReference type="EC" id="2.7.7.23" evidence="1"/>
<dbReference type="EC" id="2.3.1.157" evidence="1"/>
<dbReference type="EMBL" id="AL766852">
    <property type="protein sequence ID" value="CAD47253.1"/>
    <property type="molecule type" value="Genomic_DNA"/>
</dbReference>
<dbReference type="RefSeq" id="WP_000073775.1">
    <property type="nucleotide sequence ID" value="NC_004368.1"/>
</dbReference>
<dbReference type="SMR" id="Q8E409"/>
<dbReference type="KEGG" id="san:gbs1594"/>
<dbReference type="eggNOG" id="COG1207">
    <property type="taxonomic scope" value="Bacteria"/>
</dbReference>
<dbReference type="HOGENOM" id="CLU_029499_15_2_9"/>
<dbReference type="UniPathway" id="UPA00113">
    <property type="reaction ID" value="UER00532"/>
</dbReference>
<dbReference type="UniPathway" id="UPA00113">
    <property type="reaction ID" value="UER00533"/>
</dbReference>
<dbReference type="UniPathway" id="UPA00973"/>
<dbReference type="Proteomes" id="UP000000823">
    <property type="component" value="Chromosome"/>
</dbReference>
<dbReference type="GO" id="GO:0005737">
    <property type="term" value="C:cytoplasm"/>
    <property type="evidence" value="ECO:0007669"/>
    <property type="project" value="UniProtKB-SubCell"/>
</dbReference>
<dbReference type="GO" id="GO:0016020">
    <property type="term" value="C:membrane"/>
    <property type="evidence" value="ECO:0007669"/>
    <property type="project" value="GOC"/>
</dbReference>
<dbReference type="GO" id="GO:0019134">
    <property type="term" value="F:glucosamine-1-phosphate N-acetyltransferase activity"/>
    <property type="evidence" value="ECO:0007669"/>
    <property type="project" value="UniProtKB-UniRule"/>
</dbReference>
<dbReference type="GO" id="GO:0000287">
    <property type="term" value="F:magnesium ion binding"/>
    <property type="evidence" value="ECO:0007669"/>
    <property type="project" value="UniProtKB-UniRule"/>
</dbReference>
<dbReference type="GO" id="GO:0003977">
    <property type="term" value="F:UDP-N-acetylglucosamine diphosphorylase activity"/>
    <property type="evidence" value="ECO:0007669"/>
    <property type="project" value="UniProtKB-UniRule"/>
</dbReference>
<dbReference type="GO" id="GO:0000902">
    <property type="term" value="P:cell morphogenesis"/>
    <property type="evidence" value="ECO:0007669"/>
    <property type="project" value="UniProtKB-UniRule"/>
</dbReference>
<dbReference type="GO" id="GO:0071555">
    <property type="term" value="P:cell wall organization"/>
    <property type="evidence" value="ECO:0007669"/>
    <property type="project" value="UniProtKB-KW"/>
</dbReference>
<dbReference type="GO" id="GO:0009245">
    <property type="term" value="P:lipid A biosynthetic process"/>
    <property type="evidence" value="ECO:0007669"/>
    <property type="project" value="UniProtKB-UniRule"/>
</dbReference>
<dbReference type="GO" id="GO:0009252">
    <property type="term" value="P:peptidoglycan biosynthetic process"/>
    <property type="evidence" value="ECO:0007669"/>
    <property type="project" value="UniProtKB-UniRule"/>
</dbReference>
<dbReference type="GO" id="GO:0008360">
    <property type="term" value="P:regulation of cell shape"/>
    <property type="evidence" value="ECO:0007669"/>
    <property type="project" value="UniProtKB-KW"/>
</dbReference>
<dbReference type="GO" id="GO:0006048">
    <property type="term" value="P:UDP-N-acetylglucosamine biosynthetic process"/>
    <property type="evidence" value="ECO:0007669"/>
    <property type="project" value="UniProtKB-UniPathway"/>
</dbReference>
<dbReference type="CDD" id="cd02540">
    <property type="entry name" value="GT2_GlmU_N_bac"/>
    <property type="match status" value="1"/>
</dbReference>
<dbReference type="CDD" id="cd03353">
    <property type="entry name" value="LbH_GlmU_C"/>
    <property type="match status" value="1"/>
</dbReference>
<dbReference type="Gene3D" id="2.160.10.10">
    <property type="entry name" value="Hexapeptide repeat proteins"/>
    <property type="match status" value="1"/>
</dbReference>
<dbReference type="Gene3D" id="3.90.550.10">
    <property type="entry name" value="Spore Coat Polysaccharide Biosynthesis Protein SpsA, Chain A"/>
    <property type="match status" value="1"/>
</dbReference>
<dbReference type="HAMAP" id="MF_01631">
    <property type="entry name" value="GlmU"/>
    <property type="match status" value="1"/>
</dbReference>
<dbReference type="InterPro" id="IPR005882">
    <property type="entry name" value="Bifunctional_GlmU"/>
</dbReference>
<dbReference type="InterPro" id="IPR050065">
    <property type="entry name" value="GlmU-like"/>
</dbReference>
<dbReference type="InterPro" id="IPR038009">
    <property type="entry name" value="GlmU_C_LbH"/>
</dbReference>
<dbReference type="InterPro" id="IPR001451">
    <property type="entry name" value="Hexapep"/>
</dbReference>
<dbReference type="InterPro" id="IPR005835">
    <property type="entry name" value="NTP_transferase_dom"/>
</dbReference>
<dbReference type="InterPro" id="IPR029044">
    <property type="entry name" value="Nucleotide-diphossugar_trans"/>
</dbReference>
<dbReference type="InterPro" id="IPR011004">
    <property type="entry name" value="Trimer_LpxA-like_sf"/>
</dbReference>
<dbReference type="NCBIfam" id="TIGR01173">
    <property type="entry name" value="glmU"/>
    <property type="match status" value="1"/>
</dbReference>
<dbReference type="NCBIfam" id="NF010934">
    <property type="entry name" value="PRK14354.1"/>
    <property type="match status" value="1"/>
</dbReference>
<dbReference type="PANTHER" id="PTHR43584:SF3">
    <property type="entry name" value="BIFUNCTIONAL PROTEIN GLMU"/>
    <property type="match status" value="1"/>
</dbReference>
<dbReference type="PANTHER" id="PTHR43584">
    <property type="entry name" value="NUCLEOTIDYL TRANSFERASE"/>
    <property type="match status" value="1"/>
</dbReference>
<dbReference type="Pfam" id="PF00132">
    <property type="entry name" value="Hexapep"/>
    <property type="match status" value="2"/>
</dbReference>
<dbReference type="Pfam" id="PF00483">
    <property type="entry name" value="NTP_transferase"/>
    <property type="match status" value="1"/>
</dbReference>
<dbReference type="SUPFAM" id="SSF53448">
    <property type="entry name" value="Nucleotide-diphospho-sugar transferases"/>
    <property type="match status" value="1"/>
</dbReference>
<dbReference type="SUPFAM" id="SSF51161">
    <property type="entry name" value="Trimeric LpxA-like enzymes"/>
    <property type="match status" value="1"/>
</dbReference>
<feature type="chain" id="PRO_0000233846" description="Bifunctional protein GlmU">
    <location>
        <begin position="1"/>
        <end position="459"/>
    </location>
</feature>
<feature type="region of interest" description="Pyrophosphorylase" evidence="1">
    <location>
        <begin position="1"/>
        <end position="229"/>
    </location>
</feature>
<feature type="region of interest" description="Linker" evidence="1">
    <location>
        <begin position="230"/>
        <end position="250"/>
    </location>
</feature>
<feature type="region of interest" description="N-acetyltransferase" evidence="1">
    <location>
        <begin position="251"/>
        <end position="459"/>
    </location>
</feature>
<feature type="active site" description="Proton acceptor" evidence="1">
    <location>
        <position position="362"/>
    </location>
</feature>
<feature type="binding site" evidence="1">
    <location>
        <begin position="8"/>
        <end position="11"/>
    </location>
    <ligand>
        <name>UDP-N-acetyl-alpha-D-glucosamine</name>
        <dbReference type="ChEBI" id="CHEBI:57705"/>
    </ligand>
</feature>
<feature type="binding site" evidence="1">
    <location>
        <position position="22"/>
    </location>
    <ligand>
        <name>UDP-N-acetyl-alpha-D-glucosamine</name>
        <dbReference type="ChEBI" id="CHEBI:57705"/>
    </ligand>
</feature>
<feature type="binding site" evidence="1">
    <location>
        <position position="72"/>
    </location>
    <ligand>
        <name>UDP-N-acetyl-alpha-D-glucosamine</name>
        <dbReference type="ChEBI" id="CHEBI:57705"/>
    </ligand>
</feature>
<feature type="binding site" evidence="1">
    <location>
        <begin position="77"/>
        <end position="78"/>
    </location>
    <ligand>
        <name>UDP-N-acetyl-alpha-D-glucosamine</name>
        <dbReference type="ChEBI" id="CHEBI:57705"/>
    </ligand>
</feature>
<feature type="binding site" evidence="1">
    <location>
        <position position="102"/>
    </location>
    <ligand>
        <name>Mg(2+)</name>
        <dbReference type="ChEBI" id="CHEBI:18420"/>
    </ligand>
</feature>
<feature type="binding site" evidence="1">
    <location>
        <position position="139"/>
    </location>
    <ligand>
        <name>UDP-N-acetyl-alpha-D-glucosamine</name>
        <dbReference type="ChEBI" id="CHEBI:57705"/>
    </ligand>
</feature>
<feature type="binding site" evidence="1">
    <location>
        <position position="154"/>
    </location>
    <ligand>
        <name>UDP-N-acetyl-alpha-D-glucosamine</name>
        <dbReference type="ChEBI" id="CHEBI:57705"/>
    </ligand>
</feature>
<feature type="binding site" evidence="1">
    <location>
        <position position="169"/>
    </location>
    <ligand>
        <name>UDP-N-acetyl-alpha-D-glucosamine</name>
        <dbReference type="ChEBI" id="CHEBI:57705"/>
    </ligand>
</feature>
<feature type="binding site" evidence="1">
    <location>
        <position position="227"/>
    </location>
    <ligand>
        <name>Mg(2+)</name>
        <dbReference type="ChEBI" id="CHEBI:18420"/>
    </ligand>
</feature>
<feature type="binding site" evidence="1">
    <location>
        <position position="227"/>
    </location>
    <ligand>
        <name>UDP-N-acetyl-alpha-D-glucosamine</name>
        <dbReference type="ChEBI" id="CHEBI:57705"/>
    </ligand>
</feature>
<feature type="binding site" evidence="1">
    <location>
        <position position="332"/>
    </location>
    <ligand>
        <name>UDP-N-acetyl-alpha-D-glucosamine</name>
        <dbReference type="ChEBI" id="CHEBI:57705"/>
    </ligand>
</feature>
<feature type="binding site" evidence="1">
    <location>
        <position position="350"/>
    </location>
    <ligand>
        <name>UDP-N-acetyl-alpha-D-glucosamine</name>
        <dbReference type="ChEBI" id="CHEBI:57705"/>
    </ligand>
</feature>
<feature type="binding site" evidence="1">
    <location>
        <position position="365"/>
    </location>
    <ligand>
        <name>UDP-N-acetyl-alpha-D-glucosamine</name>
        <dbReference type="ChEBI" id="CHEBI:57705"/>
    </ligand>
</feature>
<feature type="binding site" evidence="1">
    <location>
        <position position="376"/>
    </location>
    <ligand>
        <name>UDP-N-acetyl-alpha-D-glucosamine</name>
        <dbReference type="ChEBI" id="CHEBI:57705"/>
    </ligand>
</feature>
<feature type="binding site" evidence="1">
    <location>
        <position position="379"/>
    </location>
    <ligand>
        <name>acetyl-CoA</name>
        <dbReference type="ChEBI" id="CHEBI:57288"/>
    </ligand>
</feature>
<feature type="binding site" evidence="1">
    <location>
        <begin position="385"/>
        <end position="386"/>
    </location>
    <ligand>
        <name>acetyl-CoA</name>
        <dbReference type="ChEBI" id="CHEBI:57288"/>
    </ligand>
</feature>
<feature type="binding site" evidence="1">
    <location>
        <position position="404"/>
    </location>
    <ligand>
        <name>acetyl-CoA</name>
        <dbReference type="ChEBI" id="CHEBI:57288"/>
    </ligand>
</feature>
<feature type="binding site" evidence="1">
    <location>
        <position position="422"/>
    </location>
    <ligand>
        <name>acetyl-CoA</name>
        <dbReference type="ChEBI" id="CHEBI:57288"/>
    </ligand>
</feature>
<feature type="binding site" evidence="1">
    <location>
        <position position="439"/>
    </location>
    <ligand>
        <name>acetyl-CoA</name>
        <dbReference type="ChEBI" id="CHEBI:57288"/>
    </ligand>
</feature>
<protein>
    <recommendedName>
        <fullName evidence="1">Bifunctional protein GlmU</fullName>
    </recommendedName>
    <domain>
        <recommendedName>
            <fullName evidence="1">UDP-N-acetylglucosamine pyrophosphorylase</fullName>
            <ecNumber evidence="1">2.7.7.23</ecNumber>
        </recommendedName>
        <alternativeName>
            <fullName evidence="1">N-acetylglucosamine-1-phosphate uridyltransferase</fullName>
        </alternativeName>
    </domain>
    <domain>
        <recommendedName>
            <fullName evidence="1">Glucosamine-1-phosphate N-acetyltransferase</fullName>
            <ecNumber evidence="1">2.3.1.157</ecNumber>
        </recommendedName>
    </domain>
</protein>
<comment type="function">
    <text evidence="1">Catalyzes the last two sequential reactions in the de novo biosynthetic pathway for UDP-N-acetylglucosamine (UDP-GlcNAc). The C-terminal domain catalyzes the transfer of acetyl group from acetyl coenzyme A to glucosamine-1-phosphate (GlcN-1-P) to produce N-acetylglucosamine-1-phosphate (GlcNAc-1-P), which is converted into UDP-GlcNAc by the transfer of uridine 5-monophosphate (from uridine 5-triphosphate), a reaction catalyzed by the N-terminal domain.</text>
</comment>
<comment type="catalytic activity">
    <reaction evidence="1">
        <text>alpha-D-glucosamine 1-phosphate + acetyl-CoA = N-acetyl-alpha-D-glucosamine 1-phosphate + CoA + H(+)</text>
        <dbReference type="Rhea" id="RHEA:13725"/>
        <dbReference type="ChEBI" id="CHEBI:15378"/>
        <dbReference type="ChEBI" id="CHEBI:57287"/>
        <dbReference type="ChEBI" id="CHEBI:57288"/>
        <dbReference type="ChEBI" id="CHEBI:57776"/>
        <dbReference type="ChEBI" id="CHEBI:58516"/>
        <dbReference type="EC" id="2.3.1.157"/>
    </reaction>
</comment>
<comment type="catalytic activity">
    <reaction evidence="1">
        <text>N-acetyl-alpha-D-glucosamine 1-phosphate + UTP + H(+) = UDP-N-acetyl-alpha-D-glucosamine + diphosphate</text>
        <dbReference type="Rhea" id="RHEA:13509"/>
        <dbReference type="ChEBI" id="CHEBI:15378"/>
        <dbReference type="ChEBI" id="CHEBI:33019"/>
        <dbReference type="ChEBI" id="CHEBI:46398"/>
        <dbReference type="ChEBI" id="CHEBI:57705"/>
        <dbReference type="ChEBI" id="CHEBI:57776"/>
        <dbReference type="EC" id="2.7.7.23"/>
    </reaction>
</comment>
<comment type="cofactor">
    <cofactor evidence="1">
        <name>Mg(2+)</name>
        <dbReference type="ChEBI" id="CHEBI:18420"/>
    </cofactor>
    <text evidence="1">Binds 1 Mg(2+) ion per subunit.</text>
</comment>
<comment type="pathway">
    <text evidence="1">Nucleotide-sugar biosynthesis; UDP-N-acetyl-alpha-D-glucosamine biosynthesis; N-acetyl-alpha-D-glucosamine 1-phosphate from alpha-D-glucosamine 6-phosphate (route II): step 2/2.</text>
</comment>
<comment type="pathway">
    <text evidence="1">Nucleotide-sugar biosynthesis; UDP-N-acetyl-alpha-D-glucosamine biosynthesis; UDP-N-acetyl-alpha-D-glucosamine from N-acetyl-alpha-D-glucosamine 1-phosphate: step 1/1.</text>
</comment>
<comment type="pathway">
    <text evidence="1">Bacterial outer membrane biogenesis; LPS lipid A biosynthesis.</text>
</comment>
<comment type="subunit">
    <text evidence="1">Homotrimer.</text>
</comment>
<comment type="subcellular location">
    <subcellularLocation>
        <location evidence="1">Cytoplasm</location>
    </subcellularLocation>
</comment>
<comment type="similarity">
    <text evidence="1">In the N-terminal section; belongs to the N-acetylglucosamine-1-phosphate uridyltransferase family.</text>
</comment>
<comment type="similarity">
    <text evidence="1">In the C-terminal section; belongs to the transferase hexapeptide repeat family.</text>
</comment>
<reference key="1">
    <citation type="journal article" date="2002" name="Mol. Microbiol.">
        <title>Genome sequence of Streptococcus agalactiae, a pathogen causing invasive neonatal disease.</title>
        <authorList>
            <person name="Glaser P."/>
            <person name="Rusniok C."/>
            <person name="Buchrieser C."/>
            <person name="Chevalier F."/>
            <person name="Frangeul L."/>
            <person name="Msadek T."/>
            <person name="Zouine M."/>
            <person name="Couve E."/>
            <person name="Lalioui L."/>
            <person name="Poyart C."/>
            <person name="Trieu-Cuot P."/>
            <person name="Kunst F."/>
        </authorList>
    </citation>
    <scope>NUCLEOTIDE SEQUENCE [LARGE SCALE GENOMIC DNA]</scope>
    <source>
        <strain>NEM316</strain>
    </source>
</reference>